<feature type="chain" id="PRO_0000376159" description="NADH-quinone oxidoreductase subunit B">
    <location>
        <begin position="1"/>
        <end position="170"/>
    </location>
</feature>
<feature type="binding site" evidence="1">
    <location>
        <position position="42"/>
    </location>
    <ligand>
        <name>[4Fe-4S] cluster</name>
        <dbReference type="ChEBI" id="CHEBI:49883"/>
    </ligand>
</feature>
<feature type="binding site" evidence="1">
    <location>
        <position position="43"/>
    </location>
    <ligand>
        <name>[4Fe-4S] cluster</name>
        <dbReference type="ChEBI" id="CHEBI:49883"/>
    </ligand>
</feature>
<feature type="binding site" evidence="1">
    <location>
        <position position="107"/>
    </location>
    <ligand>
        <name>[4Fe-4S] cluster</name>
        <dbReference type="ChEBI" id="CHEBI:49883"/>
    </ligand>
</feature>
<feature type="binding site" evidence="1">
    <location>
        <position position="136"/>
    </location>
    <ligand>
        <name>[4Fe-4S] cluster</name>
        <dbReference type="ChEBI" id="CHEBI:49883"/>
    </ligand>
</feature>
<accession>A7ZBE5</accession>
<protein>
    <recommendedName>
        <fullName evidence="1">NADH-quinone oxidoreductase subunit B</fullName>
        <ecNumber evidence="1">7.1.1.-</ecNumber>
    </recommendedName>
    <alternativeName>
        <fullName evidence="1">NADH dehydrogenase I subunit B</fullName>
    </alternativeName>
    <alternativeName>
        <fullName evidence="1">NDH-1 subunit B</fullName>
    </alternativeName>
</protein>
<name>NUOB_CAMC1</name>
<comment type="function">
    <text evidence="1">NDH-1 shuttles electrons from NADH, via FMN and iron-sulfur (Fe-S) centers, to quinones in the respiratory chain. The immediate electron acceptor for the enzyme in this species is believed to be ubiquinone. Couples the redox reaction to proton translocation (for every two electrons transferred, four hydrogen ions are translocated across the cytoplasmic membrane), and thus conserves the redox energy in a proton gradient.</text>
</comment>
<comment type="catalytic activity">
    <reaction evidence="1">
        <text>a quinone + NADH + 5 H(+)(in) = a quinol + NAD(+) + 4 H(+)(out)</text>
        <dbReference type="Rhea" id="RHEA:57888"/>
        <dbReference type="ChEBI" id="CHEBI:15378"/>
        <dbReference type="ChEBI" id="CHEBI:24646"/>
        <dbReference type="ChEBI" id="CHEBI:57540"/>
        <dbReference type="ChEBI" id="CHEBI:57945"/>
        <dbReference type="ChEBI" id="CHEBI:132124"/>
    </reaction>
</comment>
<comment type="cofactor">
    <cofactor evidence="1">
        <name>[4Fe-4S] cluster</name>
        <dbReference type="ChEBI" id="CHEBI:49883"/>
    </cofactor>
    <text evidence="1">Binds 1 [4Fe-4S] cluster.</text>
</comment>
<comment type="subunit">
    <text evidence="1">NDH-1 is composed of 14 different subunits. Subunits NuoB, C, D, E, F, and G constitute the peripheral sector of the complex.</text>
</comment>
<comment type="subcellular location">
    <subcellularLocation>
        <location evidence="1">Cell inner membrane</location>
        <topology evidence="1">Peripheral membrane protein</topology>
        <orientation evidence="1">Cytoplasmic side</orientation>
    </subcellularLocation>
</comment>
<comment type="similarity">
    <text evidence="1">Belongs to the complex I 20 kDa subunit family.</text>
</comment>
<proteinExistence type="inferred from homology"/>
<evidence type="ECO:0000255" key="1">
    <source>
        <dbReference type="HAMAP-Rule" id="MF_01356"/>
    </source>
</evidence>
<reference key="1">
    <citation type="submission" date="2007-10" db="EMBL/GenBank/DDBJ databases">
        <title>Genome sequence of Campylobacter concisus 13826 isolated from human feces.</title>
        <authorList>
            <person name="Fouts D.E."/>
            <person name="Mongodin E.F."/>
            <person name="Puiu D."/>
            <person name="Sebastian Y."/>
            <person name="Miller W.G."/>
            <person name="Mandrell R.E."/>
            <person name="On S."/>
            <person name="Nelson K.E."/>
        </authorList>
    </citation>
    <scope>NUCLEOTIDE SEQUENCE [LARGE SCALE GENOMIC DNA]</scope>
    <source>
        <strain>13826</strain>
    </source>
</reference>
<keyword id="KW-0004">4Fe-4S</keyword>
<keyword id="KW-0997">Cell inner membrane</keyword>
<keyword id="KW-1003">Cell membrane</keyword>
<keyword id="KW-0408">Iron</keyword>
<keyword id="KW-0411">Iron-sulfur</keyword>
<keyword id="KW-0472">Membrane</keyword>
<keyword id="KW-0479">Metal-binding</keyword>
<keyword id="KW-0520">NAD</keyword>
<keyword id="KW-0874">Quinone</keyword>
<keyword id="KW-1278">Translocase</keyword>
<keyword id="KW-0813">Transport</keyword>
<keyword id="KW-0830">Ubiquinone</keyword>
<dbReference type="EC" id="7.1.1.-" evidence="1"/>
<dbReference type="EMBL" id="CP000792">
    <property type="protein sequence ID" value="EAT97862.1"/>
    <property type="molecule type" value="Genomic_DNA"/>
</dbReference>
<dbReference type="RefSeq" id="WP_012001120.1">
    <property type="nucleotide sequence ID" value="NC_009802.2"/>
</dbReference>
<dbReference type="SMR" id="A7ZBE5"/>
<dbReference type="STRING" id="360104.CCC13826_1657"/>
<dbReference type="KEGG" id="cco:CCC13826_1657"/>
<dbReference type="eggNOG" id="COG0377">
    <property type="taxonomic scope" value="Bacteria"/>
</dbReference>
<dbReference type="HOGENOM" id="CLU_055737_7_3_7"/>
<dbReference type="OrthoDB" id="9786737at2"/>
<dbReference type="Proteomes" id="UP000001121">
    <property type="component" value="Chromosome"/>
</dbReference>
<dbReference type="GO" id="GO:0005886">
    <property type="term" value="C:plasma membrane"/>
    <property type="evidence" value="ECO:0007669"/>
    <property type="project" value="UniProtKB-SubCell"/>
</dbReference>
<dbReference type="GO" id="GO:0045271">
    <property type="term" value="C:respiratory chain complex I"/>
    <property type="evidence" value="ECO:0007669"/>
    <property type="project" value="TreeGrafter"/>
</dbReference>
<dbReference type="GO" id="GO:0051539">
    <property type="term" value="F:4 iron, 4 sulfur cluster binding"/>
    <property type="evidence" value="ECO:0007669"/>
    <property type="project" value="UniProtKB-KW"/>
</dbReference>
<dbReference type="GO" id="GO:0005506">
    <property type="term" value="F:iron ion binding"/>
    <property type="evidence" value="ECO:0007669"/>
    <property type="project" value="UniProtKB-UniRule"/>
</dbReference>
<dbReference type="GO" id="GO:0008137">
    <property type="term" value="F:NADH dehydrogenase (ubiquinone) activity"/>
    <property type="evidence" value="ECO:0007669"/>
    <property type="project" value="InterPro"/>
</dbReference>
<dbReference type="GO" id="GO:0050136">
    <property type="term" value="F:NADH:ubiquinone reductase (non-electrogenic) activity"/>
    <property type="evidence" value="ECO:0007669"/>
    <property type="project" value="UniProtKB-UniRule"/>
</dbReference>
<dbReference type="GO" id="GO:0048038">
    <property type="term" value="F:quinone binding"/>
    <property type="evidence" value="ECO:0007669"/>
    <property type="project" value="UniProtKB-KW"/>
</dbReference>
<dbReference type="GO" id="GO:0009060">
    <property type="term" value="P:aerobic respiration"/>
    <property type="evidence" value="ECO:0007669"/>
    <property type="project" value="TreeGrafter"/>
</dbReference>
<dbReference type="GO" id="GO:0015990">
    <property type="term" value="P:electron transport coupled proton transport"/>
    <property type="evidence" value="ECO:0007669"/>
    <property type="project" value="TreeGrafter"/>
</dbReference>
<dbReference type="FunFam" id="3.40.50.12280:FF:000002">
    <property type="entry name" value="NADH-quinone oxidoreductase subunit B"/>
    <property type="match status" value="1"/>
</dbReference>
<dbReference type="Gene3D" id="3.40.50.12280">
    <property type="match status" value="1"/>
</dbReference>
<dbReference type="HAMAP" id="MF_01356">
    <property type="entry name" value="NDH1_NuoB"/>
    <property type="match status" value="1"/>
</dbReference>
<dbReference type="InterPro" id="IPR006137">
    <property type="entry name" value="NADH_UbQ_OxRdtase-like_20kDa"/>
</dbReference>
<dbReference type="InterPro" id="IPR006138">
    <property type="entry name" value="NADH_UQ_OxRdtase_20Kd_su"/>
</dbReference>
<dbReference type="NCBIfam" id="TIGR01957">
    <property type="entry name" value="nuoB_fam"/>
    <property type="match status" value="1"/>
</dbReference>
<dbReference type="NCBIfam" id="NF005012">
    <property type="entry name" value="PRK06411.1"/>
    <property type="match status" value="1"/>
</dbReference>
<dbReference type="PANTHER" id="PTHR11995">
    <property type="entry name" value="NADH DEHYDROGENASE"/>
    <property type="match status" value="1"/>
</dbReference>
<dbReference type="PANTHER" id="PTHR11995:SF14">
    <property type="entry name" value="NADH DEHYDROGENASE [UBIQUINONE] IRON-SULFUR PROTEIN 7, MITOCHONDRIAL"/>
    <property type="match status" value="1"/>
</dbReference>
<dbReference type="Pfam" id="PF01058">
    <property type="entry name" value="Oxidored_q6"/>
    <property type="match status" value="1"/>
</dbReference>
<dbReference type="SUPFAM" id="SSF56770">
    <property type="entry name" value="HydA/Nqo6-like"/>
    <property type="match status" value="1"/>
</dbReference>
<sequence length="170" mass="19096">MAKHQINYAANGGLPVVLTTVDKLVQWGRSNSLWALSYGLACCAIEMMASGASRYDFDRFGTIFRASPRHSEVMIIAGTLTKKHAEFTRRLYDQMPEPKWVISMGSCANTGGMFNTYSTVQGVDRIIPVDIYIPGCAPRPETLQYALMMLQKKIRKQSAFRAQKPRKLEI</sequence>
<organism>
    <name type="scientific">Campylobacter concisus (strain 13826)</name>
    <dbReference type="NCBI Taxonomy" id="360104"/>
    <lineage>
        <taxon>Bacteria</taxon>
        <taxon>Pseudomonadati</taxon>
        <taxon>Campylobacterota</taxon>
        <taxon>Epsilonproteobacteria</taxon>
        <taxon>Campylobacterales</taxon>
        <taxon>Campylobacteraceae</taxon>
        <taxon>Campylobacter</taxon>
    </lineage>
</organism>
<gene>
    <name evidence="1" type="primary">nuoB</name>
    <name type="ordered locus">Ccon26_01870</name>
    <name type="ORF">CCC13826_1657</name>
</gene>